<name>AMPA_XANOM</name>
<comment type="function">
    <text evidence="1">Presumably involved in the processing and regular turnover of intracellular proteins. Catalyzes the removal of unsubstituted N-terminal amino acids from various peptides.</text>
</comment>
<comment type="catalytic activity">
    <reaction evidence="1">
        <text>Release of an N-terminal amino acid, Xaa-|-Yaa-, in which Xaa is preferably Leu, but may be other amino acids including Pro although not Arg or Lys, and Yaa may be Pro. Amino acid amides and methyl esters are also readily hydrolyzed, but rates on arylamides are exceedingly low.</text>
        <dbReference type="EC" id="3.4.11.1"/>
    </reaction>
</comment>
<comment type="catalytic activity">
    <reaction evidence="1">
        <text>Release of an N-terminal amino acid, preferentially leucine, but not glutamic or aspartic acids.</text>
        <dbReference type="EC" id="3.4.11.10"/>
    </reaction>
</comment>
<comment type="cofactor">
    <cofactor evidence="1">
        <name>Mn(2+)</name>
        <dbReference type="ChEBI" id="CHEBI:29035"/>
    </cofactor>
    <text evidence="1">Binds 2 manganese ions per subunit.</text>
</comment>
<comment type="subcellular location">
    <subcellularLocation>
        <location evidence="1">Cytoplasm</location>
    </subcellularLocation>
</comment>
<comment type="similarity">
    <text evidence="1">Belongs to the peptidase M17 family.</text>
</comment>
<gene>
    <name evidence="1" type="primary">pepA</name>
    <name type="ordered locus">XOO0760</name>
</gene>
<dbReference type="EC" id="3.4.11.1" evidence="1"/>
<dbReference type="EC" id="3.4.11.10" evidence="1"/>
<dbReference type="EMBL" id="AP008229">
    <property type="protein sequence ID" value="BAE67515.1"/>
    <property type="molecule type" value="Genomic_DNA"/>
</dbReference>
<dbReference type="RefSeq" id="WP_011257713.1">
    <property type="nucleotide sequence ID" value="NC_007705.1"/>
</dbReference>
<dbReference type="SMR" id="Q2P7G2"/>
<dbReference type="MEROPS" id="M17.003"/>
<dbReference type="KEGG" id="xom:XOO0760"/>
<dbReference type="HOGENOM" id="CLU_013734_0_1_6"/>
<dbReference type="GO" id="GO:0005737">
    <property type="term" value="C:cytoplasm"/>
    <property type="evidence" value="ECO:0007669"/>
    <property type="project" value="UniProtKB-SubCell"/>
</dbReference>
<dbReference type="GO" id="GO:0030145">
    <property type="term" value="F:manganese ion binding"/>
    <property type="evidence" value="ECO:0007669"/>
    <property type="project" value="UniProtKB-UniRule"/>
</dbReference>
<dbReference type="GO" id="GO:0070006">
    <property type="term" value="F:metalloaminopeptidase activity"/>
    <property type="evidence" value="ECO:0007669"/>
    <property type="project" value="InterPro"/>
</dbReference>
<dbReference type="GO" id="GO:0006508">
    <property type="term" value="P:proteolysis"/>
    <property type="evidence" value="ECO:0007669"/>
    <property type="project" value="UniProtKB-KW"/>
</dbReference>
<dbReference type="CDD" id="cd00433">
    <property type="entry name" value="Peptidase_M17"/>
    <property type="match status" value="1"/>
</dbReference>
<dbReference type="Gene3D" id="3.40.220.10">
    <property type="entry name" value="Leucine Aminopeptidase, subunit E, domain 1"/>
    <property type="match status" value="1"/>
</dbReference>
<dbReference type="Gene3D" id="3.40.630.10">
    <property type="entry name" value="Zn peptidases"/>
    <property type="match status" value="1"/>
</dbReference>
<dbReference type="HAMAP" id="MF_00181">
    <property type="entry name" value="Cytosol_peptidase_M17"/>
    <property type="match status" value="1"/>
</dbReference>
<dbReference type="InterPro" id="IPR011356">
    <property type="entry name" value="Leucine_aapep/pepB"/>
</dbReference>
<dbReference type="InterPro" id="IPR043472">
    <property type="entry name" value="Macro_dom-like"/>
</dbReference>
<dbReference type="InterPro" id="IPR000819">
    <property type="entry name" value="Peptidase_M17_C"/>
</dbReference>
<dbReference type="InterPro" id="IPR023042">
    <property type="entry name" value="Peptidase_M17_leu_NH2_pept"/>
</dbReference>
<dbReference type="InterPro" id="IPR008283">
    <property type="entry name" value="Peptidase_M17_N"/>
</dbReference>
<dbReference type="NCBIfam" id="NF002074">
    <property type="entry name" value="PRK00913.1-4"/>
    <property type="match status" value="1"/>
</dbReference>
<dbReference type="PANTHER" id="PTHR11963:SF23">
    <property type="entry name" value="CYTOSOL AMINOPEPTIDASE"/>
    <property type="match status" value="1"/>
</dbReference>
<dbReference type="PANTHER" id="PTHR11963">
    <property type="entry name" value="LEUCINE AMINOPEPTIDASE-RELATED"/>
    <property type="match status" value="1"/>
</dbReference>
<dbReference type="Pfam" id="PF00883">
    <property type="entry name" value="Peptidase_M17"/>
    <property type="match status" value="1"/>
</dbReference>
<dbReference type="Pfam" id="PF02789">
    <property type="entry name" value="Peptidase_M17_N"/>
    <property type="match status" value="1"/>
</dbReference>
<dbReference type="PRINTS" id="PR00481">
    <property type="entry name" value="LAMNOPPTDASE"/>
</dbReference>
<dbReference type="SUPFAM" id="SSF52949">
    <property type="entry name" value="Macro domain-like"/>
    <property type="match status" value="1"/>
</dbReference>
<dbReference type="SUPFAM" id="SSF53187">
    <property type="entry name" value="Zn-dependent exopeptidases"/>
    <property type="match status" value="1"/>
</dbReference>
<dbReference type="PROSITE" id="PS00631">
    <property type="entry name" value="CYTOSOL_AP"/>
    <property type="match status" value="1"/>
</dbReference>
<sequence>MALQFTLNQDAPASAAVDCIVVGAFADKTLSPAAQALDSASQGRLTALLARGDVAGKTGSTTLLHDLPGVAAPRVLVVGLGDAGKFGVAPYLKAIGDATRALKTGAVGTALLTLTELTVKARDAAWNIRQAVTVSDHAAYRYTATLGKKKVDETGLTTLAIAGDDARALAVGVATAEGVEFARELGNLPPNYCTPAYLADTAAAFAGKFPGAEAEILDEAQMEALGMGSLLSVARGSANRPRLIVLKWNGGGDARPYVLVGKGITFDTGGVNLKTQGGIEEMKYDMCGGATVIGTFVATVKAELPINLVVVVPAVENAIDGNAYRPSDVITSMSGKTIEVGNTDAEGRLILCDALTYAERFNPEALVDVATLTGACMVALGHQTAGLMSKHDDLANELLAAGEHVFDRAWRLPLWDEYQGLLDSTFADVYNIGGRWGGAITAGCFLSRFTENQRWAHLDIAGVASDEGKRGMATGRPVGLLTQWLLDRAA</sequence>
<proteinExistence type="inferred from homology"/>
<evidence type="ECO:0000255" key="1">
    <source>
        <dbReference type="HAMAP-Rule" id="MF_00181"/>
    </source>
</evidence>
<protein>
    <recommendedName>
        <fullName evidence="1">Probable cytosol aminopeptidase</fullName>
        <ecNumber evidence="1">3.4.11.1</ecNumber>
    </recommendedName>
    <alternativeName>
        <fullName evidence="1">Leucine aminopeptidase</fullName>
        <shortName evidence="1">LAP</shortName>
        <ecNumber evidence="1">3.4.11.10</ecNumber>
    </alternativeName>
    <alternativeName>
        <fullName evidence="1">Leucyl aminopeptidase</fullName>
    </alternativeName>
</protein>
<organism>
    <name type="scientific">Xanthomonas oryzae pv. oryzae (strain MAFF 311018)</name>
    <dbReference type="NCBI Taxonomy" id="342109"/>
    <lineage>
        <taxon>Bacteria</taxon>
        <taxon>Pseudomonadati</taxon>
        <taxon>Pseudomonadota</taxon>
        <taxon>Gammaproteobacteria</taxon>
        <taxon>Lysobacterales</taxon>
        <taxon>Lysobacteraceae</taxon>
        <taxon>Xanthomonas</taxon>
    </lineage>
</organism>
<feature type="chain" id="PRO_1000020001" description="Probable cytosol aminopeptidase">
    <location>
        <begin position="1"/>
        <end position="490"/>
    </location>
</feature>
<feature type="active site" evidence="1">
    <location>
        <position position="274"/>
    </location>
</feature>
<feature type="active site" evidence="1">
    <location>
        <position position="348"/>
    </location>
</feature>
<feature type="binding site" evidence="1">
    <location>
        <position position="262"/>
    </location>
    <ligand>
        <name>Mn(2+)</name>
        <dbReference type="ChEBI" id="CHEBI:29035"/>
        <label>2</label>
    </ligand>
</feature>
<feature type="binding site" evidence="1">
    <location>
        <position position="267"/>
    </location>
    <ligand>
        <name>Mn(2+)</name>
        <dbReference type="ChEBI" id="CHEBI:29035"/>
        <label>1</label>
    </ligand>
</feature>
<feature type="binding site" evidence="1">
    <location>
        <position position="267"/>
    </location>
    <ligand>
        <name>Mn(2+)</name>
        <dbReference type="ChEBI" id="CHEBI:29035"/>
        <label>2</label>
    </ligand>
</feature>
<feature type="binding site" evidence="1">
    <location>
        <position position="285"/>
    </location>
    <ligand>
        <name>Mn(2+)</name>
        <dbReference type="ChEBI" id="CHEBI:29035"/>
        <label>2</label>
    </ligand>
</feature>
<feature type="binding site" evidence="1">
    <location>
        <position position="344"/>
    </location>
    <ligand>
        <name>Mn(2+)</name>
        <dbReference type="ChEBI" id="CHEBI:29035"/>
        <label>1</label>
    </ligand>
</feature>
<feature type="binding site" evidence="1">
    <location>
        <position position="346"/>
    </location>
    <ligand>
        <name>Mn(2+)</name>
        <dbReference type="ChEBI" id="CHEBI:29035"/>
        <label>1</label>
    </ligand>
</feature>
<feature type="binding site" evidence="1">
    <location>
        <position position="346"/>
    </location>
    <ligand>
        <name>Mn(2+)</name>
        <dbReference type="ChEBI" id="CHEBI:29035"/>
        <label>2</label>
    </ligand>
</feature>
<accession>Q2P7G2</accession>
<keyword id="KW-0031">Aminopeptidase</keyword>
<keyword id="KW-0963">Cytoplasm</keyword>
<keyword id="KW-0378">Hydrolase</keyword>
<keyword id="KW-0464">Manganese</keyword>
<keyword id="KW-0479">Metal-binding</keyword>
<keyword id="KW-0645">Protease</keyword>
<reference key="1">
    <citation type="journal article" date="2005" name="Jpn. Agric. Res. Q.">
        <title>Genome sequence of Xanthomonas oryzae pv. oryzae suggests contribution of large numbers of effector genes and insertion sequences to its race diversity.</title>
        <authorList>
            <person name="Ochiai H."/>
            <person name="Inoue Y."/>
            <person name="Takeya M."/>
            <person name="Sasaki A."/>
            <person name="Kaku H."/>
        </authorList>
    </citation>
    <scope>NUCLEOTIDE SEQUENCE [LARGE SCALE GENOMIC DNA]</scope>
    <source>
        <strain>MAFF 311018</strain>
    </source>
</reference>